<organism>
    <name type="scientific">Salmonella typhi</name>
    <dbReference type="NCBI Taxonomy" id="90370"/>
    <lineage>
        <taxon>Bacteria</taxon>
        <taxon>Pseudomonadati</taxon>
        <taxon>Pseudomonadota</taxon>
        <taxon>Gammaproteobacteria</taxon>
        <taxon>Enterobacterales</taxon>
        <taxon>Enterobacteriaceae</taxon>
        <taxon>Salmonella</taxon>
    </lineage>
</organism>
<gene>
    <name type="primary">preT</name>
    <name type="synonym">yeiT</name>
    <name type="ordered locus">STY2416</name>
    <name type="ordered locus">t0669</name>
</gene>
<comment type="function">
    <text evidence="1">Involved in pyrimidine base degradation. Catalyzes physiologically the reduction of uracil to 5,6-dihydrouracil (DHU) by using NADH as a specific cosubstrate. It also catalyzes the reverse reaction and the reduction of thymine to 5,6-dihydrothymine (DHT) (By similarity).</text>
</comment>
<comment type="catalytic activity">
    <reaction>
        <text>5,6-dihydrouracil + NAD(+) = uracil + NADH + H(+)</text>
        <dbReference type="Rhea" id="RHEA:20189"/>
        <dbReference type="ChEBI" id="CHEBI:15378"/>
        <dbReference type="ChEBI" id="CHEBI:15901"/>
        <dbReference type="ChEBI" id="CHEBI:17568"/>
        <dbReference type="ChEBI" id="CHEBI:57540"/>
        <dbReference type="ChEBI" id="CHEBI:57945"/>
        <dbReference type="EC" id="1.3.1.1"/>
    </reaction>
</comment>
<comment type="catalytic activity">
    <reaction>
        <text>5,6-dihydrothymine + NAD(+) = thymine + NADH + H(+)</text>
        <dbReference type="Rhea" id="RHEA:28791"/>
        <dbReference type="ChEBI" id="CHEBI:15378"/>
        <dbReference type="ChEBI" id="CHEBI:17821"/>
        <dbReference type="ChEBI" id="CHEBI:27468"/>
        <dbReference type="ChEBI" id="CHEBI:57540"/>
        <dbReference type="ChEBI" id="CHEBI:57945"/>
        <dbReference type="EC" id="1.3.1.1"/>
    </reaction>
</comment>
<comment type="subunit">
    <text evidence="1">Heterotetramer of 2 PreA and 2 PreT subunits.</text>
</comment>
<comment type="similarity">
    <text evidence="2">Belongs to the NADH dehydrogenase family.</text>
</comment>
<comment type="caution">
    <text evidence="2">Usually PreT interacts with PreA to form the active dehydrogenase. In S.typhi PreA is a pseudogene which does not possess the conserved 4Fe-4S ferredoxin-type domains.</text>
</comment>
<proteinExistence type="inferred from homology"/>
<reference key="1">
    <citation type="journal article" date="2001" name="Nature">
        <title>Complete genome sequence of a multiple drug resistant Salmonella enterica serovar Typhi CT18.</title>
        <authorList>
            <person name="Parkhill J."/>
            <person name="Dougan G."/>
            <person name="James K.D."/>
            <person name="Thomson N.R."/>
            <person name="Pickard D."/>
            <person name="Wain J."/>
            <person name="Churcher C.M."/>
            <person name="Mungall K.L."/>
            <person name="Bentley S.D."/>
            <person name="Holden M.T.G."/>
            <person name="Sebaihia M."/>
            <person name="Baker S."/>
            <person name="Basham D."/>
            <person name="Brooks K."/>
            <person name="Chillingworth T."/>
            <person name="Connerton P."/>
            <person name="Cronin A."/>
            <person name="Davis P."/>
            <person name="Davies R.M."/>
            <person name="Dowd L."/>
            <person name="White N."/>
            <person name="Farrar J."/>
            <person name="Feltwell T."/>
            <person name="Hamlin N."/>
            <person name="Haque A."/>
            <person name="Hien T.T."/>
            <person name="Holroyd S."/>
            <person name="Jagels K."/>
            <person name="Krogh A."/>
            <person name="Larsen T.S."/>
            <person name="Leather S."/>
            <person name="Moule S."/>
            <person name="O'Gaora P."/>
            <person name="Parry C."/>
            <person name="Quail M.A."/>
            <person name="Rutherford K.M."/>
            <person name="Simmonds M."/>
            <person name="Skelton J."/>
            <person name="Stevens K."/>
            <person name="Whitehead S."/>
            <person name="Barrell B.G."/>
        </authorList>
    </citation>
    <scope>NUCLEOTIDE SEQUENCE [LARGE SCALE GENOMIC DNA]</scope>
    <source>
        <strain>CT18</strain>
    </source>
</reference>
<reference key="2">
    <citation type="journal article" date="2003" name="J. Bacteriol.">
        <title>Comparative genomics of Salmonella enterica serovar Typhi strains Ty2 and CT18.</title>
        <authorList>
            <person name="Deng W."/>
            <person name="Liou S.-R."/>
            <person name="Plunkett G. III"/>
            <person name="Mayhew G.F."/>
            <person name="Rose D.J."/>
            <person name="Burland V."/>
            <person name="Kodoyianni V."/>
            <person name="Schwartz D.C."/>
            <person name="Blattner F.R."/>
        </authorList>
    </citation>
    <scope>NUCLEOTIDE SEQUENCE [LARGE SCALE GENOMIC DNA]</scope>
    <source>
        <strain>ATCC 700931 / Ty2</strain>
    </source>
</reference>
<dbReference type="EC" id="1.3.1.1"/>
<dbReference type="EMBL" id="AL513382">
    <property type="protein sequence ID" value="CAD02566.1"/>
    <property type="molecule type" value="Genomic_DNA"/>
</dbReference>
<dbReference type="EMBL" id="AE014613">
    <property type="protein sequence ID" value="AAO68367.1"/>
    <property type="molecule type" value="Genomic_DNA"/>
</dbReference>
<dbReference type="RefSeq" id="NP_456745.1">
    <property type="nucleotide sequence ID" value="NC_003198.1"/>
</dbReference>
<dbReference type="RefSeq" id="WP_001136400.1">
    <property type="nucleotide sequence ID" value="NZ_WSUR01000002.1"/>
</dbReference>
<dbReference type="SMR" id="Q8Z5A6"/>
<dbReference type="STRING" id="220341.gene:17586321"/>
<dbReference type="KEGG" id="stt:t0669"/>
<dbReference type="KEGG" id="sty:STY2416"/>
<dbReference type="PATRIC" id="fig|220341.7.peg.2442"/>
<dbReference type="eggNOG" id="COG0493">
    <property type="taxonomic scope" value="Bacteria"/>
</dbReference>
<dbReference type="HOGENOM" id="CLU_000422_3_3_6"/>
<dbReference type="OMA" id="QACVRNN"/>
<dbReference type="OrthoDB" id="9803192at2"/>
<dbReference type="Proteomes" id="UP000000541">
    <property type="component" value="Chromosome"/>
</dbReference>
<dbReference type="Proteomes" id="UP000002670">
    <property type="component" value="Chromosome"/>
</dbReference>
<dbReference type="GO" id="GO:0004159">
    <property type="term" value="F:dihydropyrimidine dehydrogenase (NAD+) activity"/>
    <property type="evidence" value="ECO:0007669"/>
    <property type="project" value="UniProtKB-EC"/>
</dbReference>
<dbReference type="GO" id="GO:0051536">
    <property type="term" value="F:iron-sulfur cluster binding"/>
    <property type="evidence" value="ECO:0007669"/>
    <property type="project" value="InterPro"/>
</dbReference>
<dbReference type="GO" id="GO:0003954">
    <property type="term" value="F:NADH dehydrogenase activity"/>
    <property type="evidence" value="ECO:0000250"/>
    <property type="project" value="UniProtKB"/>
</dbReference>
<dbReference type="GO" id="GO:0006208">
    <property type="term" value="P:pyrimidine nucleobase catabolic process"/>
    <property type="evidence" value="ECO:0000250"/>
    <property type="project" value="UniProtKB"/>
</dbReference>
<dbReference type="FunFam" id="1.10.1060.10:FF:000013">
    <property type="entry name" value="NAD-dependent dihydropyrimidine dehydrogenase subunit PreT"/>
    <property type="match status" value="1"/>
</dbReference>
<dbReference type="FunFam" id="3.50.50.60:FF:000148">
    <property type="entry name" value="NAD-dependent dihydropyrimidine dehydrogenase subunit PreT"/>
    <property type="match status" value="1"/>
</dbReference>
<dbReference type="Gene3D" id="1.10.1060.10">
    <property type="entry name" value="Alpha-helical ferredoxin"/>
    <property type="match status" value="1"/>
</dbReference>
<dbReference type="Gene3D" id="3.50.50.60">
    <property type="entry name" value="FAD/NAD(P)-binding domain"/>
    <property type="match status" value="2"/>
</dbReference>
<dbReference type="InterPro" id="IPR028261">
    <property type="entry name" value="DPD_II"/>
</dbReference>
<dbReference type="InterPro" id="IPR036188">
    <property type="entry name" value="FAD/NAD-bd_sf"/>
</dbReference>
<dbReference type="InterPro" id="IPR023753">
    <property type="entry name" value="FAD/NAD-binding_dom"/>
</dbReference>
<dbReference type="InterPro" id="IPR009051">
    <property type="entry name" value="Helical_ferredxn"/>
</dbReference>
<dbReference type="PANTHER" id="PTHR43073">
    <property type="entry name" value="DIHYDROPYRIMIDINE DEHYDROGENASE [NADP(+)]"/>
    <property type="match status" value="1"/>
</dbReference>
<dbReference type="PANTHER" id="PTHR43073:SF2">
    <property type="entry name" value="DIHYDROPYRIMIDINE DEHYDROGENASE [NADP(+)]"/>
    <property type="match status" value="1"/>
</dbReference>
<dbReference type="Pfam" id="PF14691">
    <property type="entry name" value="Fer4_20"/>
    <property type="match status" value="1"/>
</dbReference>
<dbReference type="Pfam" id="PF07992">
    <property type="entry name" value="Pyr_redox_2"/>
    <property type="match status" value="1"/>
</dbReference>
<dbReference type="PRINTS" id="PR00368">
    <property type="entry name" value="FADPNR"/>
</dbReference>
<dbReference type="PRINTS" id="PR00469">
    <property type="entry name" value="PNDRDTASEII"/>
</dbReference>
<dbReference type="SUPFAM" id="SSF46548">
    <property type="entry name" value="alpha-helical ferredoxin"/>
    <property type="match status" value="1"/>
</dbReference>
<dbReference type="SUPFAM" id="SSF51971">
    <property type="entry name" value="Nucleotide-binding domain"/>
    <property type="match status" value="1"/>
</dbReference>
<feature type="chain" id="PRO_0000169158" description="NAD-dependent dihydropyrimidine dehydrogenase subunit PreT homolog">
    <location>
        <begin position="1"/>
        <end position="413"/>
    </location>
</feature>
<feature type="binding site" evidence="1">
    <location>
        <position position="287"/>
    </location>
    <ligand>
        <name>NAD(+)</name>
        <dbReference type="ChEBI" id="CHEBI:57540"/>
    </ligand>
</feature>
<keyword id="KW-0520">NAD</keyword>
<keyword id="KW-0560">Oxidoreductase</keyword>
<protein>
    <recommendedName>
        <fullName>NAD-dependent dihydropyrimidine dehydrogenase subunit PreT homolog</fullName>
        <shortName>DPD</shortName>
        <ecNumber>1.3.1.1</ecNumber>
    </recommendedName>
    <alternativeName>
        <fullName>Dihydrothymine dehydrogenase</fullName>
    </alternativeName>
    <alternativeName>
        <fullName>Dihydrouracil dehydrogenase</fullName>
    </alternativeName>
</protein>
<accession>Q8Z5A6</accession>
<sequence>MPQQNYLDELTPGFTPLLAIKEASRCLLCHDAPCSQACPAQTDPGKFIRSIYFRNFKGAAETIRENNALGAVCARVCPTEKLCQRGCTRSGIDKPIDIARLQRFITDFEQQTAMQIYQPGSKTRGKVAIIGAGPAGLQASVTLTHLGYDVTIYEKQPQPGGWLRHGIPAFRLPQSVLDQEIARIVEMGVNIKCNCDVGGSLSLAQLKAEYRAVLMTVGMSCGSDLPLFEQASHVEIAVDFLQRARQADGDISVPRSALIIGGGDVAMDVASTLKILGCPSVTCVAREELAEFPASEKEFTSTQALGVSIIDGFTPVAVSGNKVTFHHVRHSGELTLEAENIILAVGQHARLDNFAEIKAQHNIIDTHNYQTDDPAIFAAGDIVKGDKTVVYAVKTGKEAAQAIHHYLEEACSC</sequence>
<evidence type="ECO:0000250" key="1"/>
<evidence type="ECO:0000305" key="2"/>
<name>PRET_SALTI</name>